<sequence>MLISLPKVRGIYRYDVLMSKATWLNVGGRADVLFKPCDIEDLTYLIKNTELPVSVIGATSNIIVRDSGIRGITVKLGKEFAYIKSKGNNSIVAGGAVLLSNLAHFAGNQQISGLEFLVGIPGTVGGGIEMNAGAYGSDIASVVQSIKAVNLEDGNLYEFSSEEMGYFYRGHSLKGNWIFVEAEFKGVNSEYELILQRLKEVIERKNKSQPIRGKTAGCIFKNPKNYRAWELIDKSGCLRLNIGGARISKKHCNFLLNYDNATASDLENLGNKVKDAVKDKFNVELEWEIRVLGSY</sequence>
<reference key="1">
    <citation type="journal article" date="2004" name="PLoS Biol.">
        <title>Phylogenomics of the reproductive parasite Wolbachia pipientis wMel: a streamlined genome overrun by mobile genetic elements.</title>
        <authorList>
            <person name="Wu M."/>
            <person name="Sun L.V."/>
            <person name="Vamathevan J.J."/>
            <person name="Riegler M."/>
            <person name="DeBoy R.T."/>
            <person name="Brownlie J.C."/>
            <person name="McGraw E.A."/>
            <person name="Martin W."/>
            <person name="Esser C."/>
            <person name="Ahmadinejad N."/>
            <person name="Wiegand C."/>
            <person name="Madupu R."/>
            <person name="Beanan M.J."/>
            <person name="Brinkac L.M."/>
            <person name="Daugherty S.C."/>
            <person name="Durkin A.S."/>
            <person name="Kolonay J.F."/>
            <person name="Nelson W.C."/>
            <person name="Mohamoud Y."/>
            <person name="Lee P."/>
            <person name="Berry K.J."/>
            <person name="Young M.B."/>
            <person name="Utterback T.R."/>
            <person name="Weidman J.F."/>
            <person name="Nierman W.C."/>
            <person name="Paulsen I.T."/>
            <person name="Nelson K.E."/>
            <person name="Tettelin H."/>
            <person name="O'Neill S.L."/>
            <person name="Eisen J.A."/>
        </authorList>
    </citation>
    <scope>NUCLEOTIDE SEQUENCE [LARGE SCALE GENOMIC DNA]</scope>
</reference>
<proteinExistence type="inferred from homology"/>
<accession>Q73HL4</accession>
<comment type="function">
    <text evidence="1">Cell wall formation.</text>
</comment>
<comment type="catalytic activity">
    <reaction evidence="1">
        <text>UDP-N-acetyl-alpha-D-muramate + NADP(+) = UDP-N-acetyl-3-O-(1-carboxyvinyl)-alpha-D-glucosamine + NADPH + H(+)</text>
        <dbReference type="Rhea" id="RHEA:12248"/>
        <dbReference type="ChEBI" id="CHEBI:15378"/>
        <dbReference type="ChEBI" id="CHEBI:57783"/>
        <dbReference type="ChEBI" id="CHEBI:58349"/>
        <dbReference type="ChEBI" id="CHEBI:68483"/>
        <dbReference type="ChEBI" id="CHEBI:70757"/>
        <dbReference type="EC" id="1.3.1.98"/>
    </reaction>
</comment>
<comment type="cofactor">
    <cofactor evidence="1">
        <name>FAD</name>
        <dbReference type="ChEBI" id="CHEBI:57692"/>
    </cofactor>
</comment>
<comment type="pathway">
    <text evidence="1">Cell wall biogenesis; peptidoglycan biosynthesis.</text>
</comment>
<comment type="subcellular location">
    <subcellularLocation>
        <location evidence="1">Cytoplasm</location>
    </subcellularLocation>
</comment>
<comment type="similarity">
    <text evidence="1">Belongs to the MurB family.</text>
</comment>
<dbReference type="EC" id="1.3.1.98" evidence="1"/>
<dbReference type="EMBL" id="AE017196">
    <property type="protein sequence ID" value="AAS14251.1"/>
    <property type="molecule type" value="Genomic_DNA"/>
</dbReference>
<dbReference type="RefSeq" id="WP_010082163.1">
    <property type="nucleotide sequence ID" value="NZ_OX384529.1"/>
</dbReference>
<dbReference type="SMR" id="Q73HL4"/>
<dbReference type="EnsemblBacteria" id="AAS14251">
    <property type="protein sequence ID" value="AAS14251"/>
    <property type="gene ID" value="WD_0541"/>
</dbReference>
<dbReference type="GeneID" id="70036026"/>
<dbReference type="KEGG" id="wol:WD_0541"/>
<dbReference type="eggNOG" id="COG0812">
    <property type="taxonomic scope" value="Bacteria"/>
</dbReference>
<dbReference type="UniPathway" id="UPA00219"/>
<dbReference type="Proteomes" id="UP000008215">
    <property type="component" value="Chromosome"/>
</dbReference>
<dbReference type="GO" id="GO:0005829">
    <property type="term" value="C:cytosol"/>
    <property type="evidence" value="ECO:0007669"/>
    <property type="project" value="TreeGrafter"/>
</dbReference>
<dbReference type="GO" id="GO:0071949">
    <property type="term" value="F:FAD binding"/>
    <property type="evidence" value="ECO:0007669"/>
    <property type="project" value="InterPro"/>
</dbReference>
<dbReference type="GO" id="GO:0008762">
    <property type="term" value="F:UDP-N-acetylmuramate dehydrogenase activity"/>
    <property type="evidence" value="ECO:0007669"/>
    <property type="project" value="UniProtKB-UniRule"/>
</dbReference>
<dbReference type="GO" id="GO:0051301">
    <property type="term" value="P:cell division"/>
    <property type="evidence" value="ECO:0007669"/>
    <property type="project" value="UniProtKB-KW"/>
</dbReference>
<dbReference type="GO" id="GO:0071555">
    <property type="term" value="P:cell wall organization"/>
    <property type="evidence" value="ECO:0007669"/>
    <property type="project" value="UniProtKB-KW"/>
</dbReference>
<dbReference type="GO" id="GO:0009252">
    <property type="term" value="P:peptidoglycan biosynthetic process"/>
    <property type="evidence" value="ECO:0007669"/>
    <property type="project" value="UniProtKB-UniRule"/>
</dbReference>
<dbReference type="GO" id="GO:0008360">
    <property type="term" value="P:regulation of cell shape"/>
    <property type="evidence" value="ECO:0007669"/>
    <property type="project" value="UniProtKB-KW"/>
</dbReference>
<dbReference type="Gene3D" id="3.30.465.10">
    <property type="match status" value="1"/>
</dbReference>
<dbReference type="Gene3D" id="3.90.78.10">
    <property type="entry name" value="UDP-N-acetylenolpyruvoylglucosamine reductase, C-terminal domain"/>
    <property type="match status" value="1"/>
</dbReference>
<dbReference type="Gene3D" id="3.30.43.10">
    <property type="entry name" value="Uridine Diphospho-n-acetylenolpyruvylglucosamine Reductase, domain 2"/>
    <property type="match status" value="1"/>
</dbReference>
<dbReference type="HAMAP" id="MF_00037">
    <property type="entry name" value="MurB"/>
    <property type="match status" value="1"/>
</dbReference>
<dbReference type="InterPro" id="IPR016166">
    <property type="entry name" value="FAD-bd_PCMH"/>
</dbReference>
<dbReference type="InterPro" id="IPR036318">
    <property type="entry name" value="FAD-bd_PCMH-like_sf"/>
</dbReference>
<dbReference type="InterPro" id="IPR016167">
    <property type="entry name" value="FAD-bd_PCMH_sub1"/>
</dbReference>
<dbReference type="InterPro" id="IPR016169">
    <property type="entry name" value="FAD-bd_PCMH_sub2"/>
</dbReference>
<dbReference type="InterPro" id="IPR003170">
    <property type="entry name" value="MurB"/>
</dbReference>
<dbReference type="InterPro" id="IPR011601">
    <property type="entry name" value="MurB_C"/>
</dbReference>
<dbReference type="InterPro" id="IPR036635">
    <property type="entry name" value="MurB_C_sf"/>
</dbReference>
<dbReference type="InterPro" id="IPR006094">
    <property type="entry name" value="Oxid_FAD_bind_N"/>
</dbReference>
<dbReference type="NCBIfam" id="TIGR00179">
    <property type="entry name" value="murB"/>
    <property type="match status" value="1"/>
</dbReference>
<dbReference type="NCBIfam" id="NF010480">
    <property type="entry name" value="PRK13905.1"/>
    <property type="match status" value="1"/>
</dbReference>
<dbReference type="PANTHER" id="PTHR21071">
    <property type="entry name" value="UDP-N-ACETYLENOLPYRUVOYLGLUCOSAMINE REDUCTASE"/>
    <property type="match status" value="1"/>
</dbReference>
<dbReference type="PANTHER" id="PTHR21071:SF4">
    <property type="entry name" value="UDP-N-ACETYLENOLPYRUVOYLGLUCOSAMINE REDUCTASE"/>
    <property type="match status" value="1"/>
</dbReference>
<dbReference type="Pfam" id="PF01565">
    <property type="entry name" value="FAD_binding_4"/>
    <property type="match status" value="1"/>
</dbReference>
<dbReference type="Pfam" id="PF02873">
    <property type="entry name" value="MurB_C"/>
    <property type="match status" value="1"/>
</dbReference>
<dbReference type="SUPFAM" id="SSF56176">
    <property type="entry name" value="FAD-binding/transporter-associated domain-like"/>
    <property type="match status" value="1"/>
</dbReference>
<dbReference type="SUPFAM" id="SSF56194">
    <property type="entry name" value="Uridine diphospho-N-Acetylenolpyruvylglucosamine reductase, MurB, C-terminal domain"/>
    <property type="match status" value="1"/>
</dbReference>
<dbReference type="PROSITE" id="PS51387">
    <property type="entry name" value="FAD_PCMH"/>
    <property type="match status" value="1"/>
</dbReference>
<protein>
    <recommendedName>
        <fullName evidence="1">UDP-N-acetylenolpyruvoylglucosamine reductase</fullName>
        <ecNumber evidence="1">1.3.1.98</ecNumber>
    </recommendedName>
    <alternativeName>
        <fullName evidence="1">UDP-N-acetylmuramate dehydrogenase</fullName>
    </alternativeName>
</protein>
<organism>
    <name type="scientific">Wolbachia pipientis wMel</name>
    <dbReference type="NCBI Taxonomy" id="163164"/>
    <lineage>
        <taxon>Bacteria</taxon>
        <taxon>Pseudomonadati</taxon>
        <taxon>Pseudomonadota</taxon>
        <taxon>Alphaproteobacteria</taxon>
        <taxon>Rickettsiales</taxon>
        <taxon>Anaplasmataceae</taxon>
        <taxon>Wolbachieae</taxon>
        <taxon>Wolbachia</taxon>
    </lineage>
</organism>
<name>MURB_WOLPM</name>
<gene>
    <name evidence="1" type="primary">murB</name>
    <name type="ordered locus">WD_0541</name>
</gene>
<keyword id="KW-0131">Cell cycle</keyword>
<keyword id="KW-0132">Cell division</keyword>
<keyword id="KW-0133">Cell shape</keyword>
<keyword id="KW-0961">Cell wall biogenesis/degradation</keyword>
<keyword id="KW-0963">Cytoplasm</keyword>
<keyword id="KW-0274">FAD</keyword>
<keyword id="KW-0285">Flavoprotein</keyword>
<keyword id="KW-0521">NADP</keyword>
<keyword id="KW-0560">Oxidoreductase</keyword>
<keyword id="KW-0573">Peptidoglycan synthesis</keyword>
<feature type="chain" id="PRO_0000179291" description="UDP-N-acetylenolpyruvoylglucosamine reductase">
    <location>
        <begin position="1"/>
        <end position="295"/>
    </location>
</feature>
<feature type="domain" description="FAD-binding PCMH-type" evidence="1">
    <location>
        <begin position="26"/>
        <end position="189"/>
    </location>
</feature>
<feature type="active site" evidence="1">
    <location>
        <position position="169"/>
    </location>
</feature>
<feature type="active site" description="Proton donor" evidence="1">
    <location>
        <position position="218"/>
    </location>
</feature>
<feature type="active site" evidence="1">
    <location>
        <position position="288"/>
    </location>
</feature>
<evidence type="ECO:0000255" key="1">
    <source>
        <dbReference type="HAMAP-Rule" id="MF_00037"/>
    </source>
</evidence>